<protein>
    <recommendedName>
        <fullName>F-box protein At3g49450</fullName>
    </recommendedName>
</protein>
<organism>
    <name type="scientific">Arabidopsis thaliana</name>
    <name type="common">Mouse-ear cress</name>
    <dbReference type="NCBI Taxonomy" id="3702"/>
    <lineage>
        <taxon>Eukaryota</taxon>
        <taxon>Viridiplantae</taxon>
        <taxon>Streptophyta</taxon>
        <taxon>Embryophyta</taxon>
        <taxon>Tracheophyta</taxon>
        <taxon>Spermatophyta</taxon>
        <taxon>Magnoliopsida</taxon>
        <taxon>eudicotyledons</taxon>
        <taxon>Gunneridae</taxon>
        <taxon>Pentapetalae</taxon>
        <taxon>rosids</taxon>
        <taxon>malvids</taxon>
        <taxon>Brassicales</taxon>
        <taxon>Brassicaceae</taxon>
        <taxon>Camelineae</taxon>
        <taxon>Arabidopsis</taxon>
    </lineage>
</organism>
<proteinExistence type="evidence at transcript level"/>
<evidence type="ECO:0000255" key="1">
    <source>
        <dbReference type="PROSITE-ProRule" id="PRU00080"/>
    </source>
</evidence>
<evidence type="ECO:0000305" key="2"/>
<accession>Q9SCL2</accession>
<accession>A0A2H1ZEK4</accession>
<accession>Q9CA05</accession>
<keyword id="KW-1185">Reference proteome</keyword>
<gene>
    <name type="ordered locus">At3g49450</name>
    <name type="ORF">T1G12.15</name>
    <name type="ORF">T9C5.50</name>
</gene>
<dbReference type="EMBL" id="AC012329">
    <property type="protein sequence ID" value="AAG52189.1"/>
    <property type="status" value="ALT_INIT"/>
    <property type="molecule type" value="Genomic_DNA"/>
</dbReference>
<dbReference type="EMBL" id="AL132964">
    <property type="protein sequence ID" value="CAB62450.1"/>
    <property type="molecule type" value="Genomic_DNA"/>
</dbReference>
<dbReference type="EMBL" id="CP002686">
    <property type="protein sequence ID" value="AEE78545.2"/>
    <property type="status" value="ALT_INIT"/>
    <property type="molecule type" value="Genomic_DNA"/>
</dbReference>
<dbReference type="EMBL" id="DQ056618">
    <property type="protein sequence ID" value="AAY78766.1"/>
    <property type="molecule type" value="mRNA"/>
</dbReference>
<dbReference type="PIR" id="T46223">
    <property type="entry name" value="T46223"/>
</dbReference>
<dbReference type="RefSeq" id="NP_190514.2">
    <property type="nucleotide sequence ID" value="NM_114805.2"/>
</dbReference>
<dbReference type="FunCoup" id="Q9SCL2">
    <property type="interactions" value="39"/>
</dbReference>
<dbReference type="STRING" id="3702.Q9SCL2"/>
<dbReference type="PaxDb" id="3702-AT3G49450.1"/>
<dbReference type="GeneID" id="824107"/>
<dbReference type="KEGG" id="ath:AT3G49450"/>
<dbReference type="Araport" id="AT3G49450"/>
<dbReference type="TAIR" id="AT3G49450"/>
<dbReference type="HOGENOM" id="CLU_027176_8_1_1"/>
<dbReference type="InParanoid" id="Q9SCL2"/>
<dbReference type="OrthoDB" id="687122at2759"/>
<dbReference type="PhylomeDB" id="Q9SCL2"/>
<dbReference type="PRO" id="PR:Q9SCL2"/>
<dbReference type="Proteomes" id="UP000006548">
    <property type="component" value="Chromosome 3"/>
</dbReference>
<dbReference type="ExpressionAtlas" id="Q9SCL2">
    <property type="expression patterns" value="baseline"/>
</dbReference>
<dbReference type="CDD" id="cd22157">
    <property type="entry name" value="F-box_AtFBW1-like"/>
    <property type="match status" value="1"/>
</dbReference>
<dbReference type="Gene3D" id="1.20.1280.50">
    <property type="match status" value="1"/>
</dbReference>
<dbReference type="InterPro" id="IPR013187">
    <property type="entry name" value="F-box-assoc_dom_typ3"/>
</dbReference>
<dbReference type="InterPro" id="IPR017451">
    <property type="entry name" value="F-box-assoc_interact_dom"/>
</dbReference>
<dbReference type="InterPro" id="IPR036047">
    <property type="entry name" value="F-box-like_dom_sf"/>
</dbReference>
<dbReference type="InterPro" id="IPR001810">
    <property type="entry name" value="F-box_dom"/>
</dbReference>
<dbReference type="NCBIfam" id="TIGR01640">
    <property type="entry name" value="F_box_assoc_1"/>
    <property type="match status" value="1"/>
</dbReference>
<dbReference type="PANTHER" id="PTHR31111">
    <property type="entry name" value="BNAA05G37150D PROTEIN-RELATED"/>
    <property type="match status" value="1"/>
</dbReference>
<dbReference type="PANTHER" id="PTHR31111:SF132">
    <property type="entry name" value="F-BOX ASSOCIATED UBIQUITINATION EFFECTOR FAMILY PROTEIN-RELATED"/>
    <property type="match status" value="1"/>
</dbReference>
<dbReference type="Pfam" id="PF00646">
    <property type="entry name" value="F-box"/>
    <property type="match status" value="1"/>
</dbReference>
<dbReference type="Pfam" id="PF08268">
    <property type="entry name" value="FBA_3"/>
    <property type="match status" value="1"/>
</dbReference>
<dbReference type="SMART" id="SM00256">
    <property type="entry name" value="FBOX"/>
    <property type="match status" value="1"/>
</dbReference>
<dbReference type="SUPFAM" id="SSF81383">
    <property type="entry name" value="F-box domain"/>
    <property type="match status" value="1"/>
</dbReference>
<dbReference type="PROSITE" id="PS50181">
    <property type="entry name" value="FBOX"/>
    <property type="match status" value="1"/>
</dbReference>
<comment type="sequence caution" evidence="2">
    <conflict type="erroneous initiation">
        <sequence resource="EMBL-CDS" id="AAG52189"/>
    </conflict>
</comment>
<comment type="sequence caution" evidence="2">
    <conflict type="erroneous initiation">
        <sequence resource="EMBL-CDS" id="AEE78545"/>
    </conflict>
    <text>Extended N-terminus.</text>
</comment>
<name>FB197_ARATH</name>
<reference key="1">
    <citation type="journal article" date="2000" name="Nature">
        <title>Sequence and analysis of chromosome 3 of the plant Arabidopsis thaliana.</title>
        <authorList>
            <person name="Salanoubat M."/>
            <person name="Lemcke K."/>
            <person name="Rieger M."/>
            <person name="Ansorge W."/>
            <person name="Unseld M."/>
            <person name="Fartmann B."/>
            <person name="Valle G."/>
            <person name="Bloecker H."/>
            <person name="Perez-Alonso M."/>
            <person name="Obermaier B."/>
            <person name="Delseny M."/>
            <person name="Boutry M."/>
            <person name="Grivell L.A."/>
            <person name="Mache R."/>
            <person name="Puigdomenech P."/>
            <person name="De Simone V."/>
            <person name="Choisne N."/>
            <person name="Artiguenave F."/>
            <person name="Robert C."/>
            <person name="Brottier P."/>
            <person name="Wincker P."/>
            <person name="Cattolico L."/>
            <person name="Weissenbach J."/>
            <person name="Saurin W."/>
            <person name="Quetier F."/>
            <person name="Schaefer M."/>
            <person name="Mueller-Auer S."/>
            <person name="Gabel C."/>
            <person name="Fuchs M."/>
            <person name="Benes V."/>
            <person name="Wurmbach E."/>
            <person name="Drzonek H."/>
            <person name="Erfle H."/>
            <person name="Jordan N."/>
            <person name="Bangert S."/>
            <person name="Wiedelmann R."/>
            <person name="Kranz H."/>
            <person name="Voss H."/>
            <person name="Holland R."/>
            <person name="Brandt P."/>
            <person name="Nyakatura G."/>
            <person name="Vezzi A."/>
            <person name="D'Angelo M."/>
            <person name="Pallavicini A."/>
            <person name="Toppo S."/>
            <person name="Simionati B."/>
            <person name="Conrad A."/>
            <person name="Hornischer K."/>
            <person name="Kauer G."/>
            <person name="Loehnert T.-H."/>
            <person name="Nordsiek G."/>
            <person name="Reichelt J."/>
            <person name="Scharfe M."/>
            <person name="Schoen O."/>
            <person name="Bargues M."/>
            <person name="Terol J."/>
            <person name="Climent J."/>
            <person name="Navarro P."/>
            <person name="Collado C."/>
            <person name="Perez-Perez A."/>
            <person name="Ottenwaelder B."/>
            <person name="Duchemin D."/>
            <person name="Cooke R."/>
            <person name="Laudie M."/>
            <person name="Berger-Llauro C."/>
            <person name="Purnelle B."/>
            <person name="Masuy D."/>
            <person name="de Haan M."/>
            <person name="Maarse A.C."/>
            <person name="Alcaraz J.-P."/>
            <person name="Cottet A."/>
            <person name="Casacuberta E."/>
            <person name="Monfort A."/>
            <person name="Argiriou A."/>
            <person name="Flores M."/>
            <person name="Liguori R."/>
            <person name="Vitale D."/>
            <person name="Mannhaupt G."/>
            <person name="Haase D."/>
            <person name="Schoof H."/>
            <person name="Rudd S."/>
            <person name="Zaccaria P."/>
            <person name="Mewes H.-W."/>
            <person name="Mayer K.F.X."/>
            <person name="Kaul S."/>
            <person name="Town C.D."/>
            <person name="Koo H.L."/>
            <person name="Tallon L.J."/>
            <person name="Jenkins J."/>
            <person name="Rooney T."/>
            <person name="Rizzo M."/>
            <person name="Walts A."/>
            <person name="Utterback T."/>
            <person name="Fujii C.Y."/>
            <person name="Shea T.P."/>
            <person name="Creasy T.H."/>
            <person name="Haas B."/>
            <person name="Maiti R."/>
            <person name="Wu D."/>
            <person name="Peterson J."/>
            <person name="Van Aken S."/>
            <person name="Pai G."/>
            <person name="Militscher J."/>
            <person name="Sellers P."/>
            <person name="Gill J.E."/>
            <person name="Feldblyum T.V."/>
            <person name="Preuss D."/>
            <person name="Lin X."/>
            <person name="Nierman W.C."/>
            <person name="Salzberg S.L."/>
            <person name="White O."/>
            <person name="Venter J.C."/>
            <person name="Fraser C.M."/>
            <person name="Kaneko T."/>
            <person name="Nakamura Y."/>
            <person name="Sato S."/>
            <person name="Kato T."/>
            <person name="Asamizu E."/>
            <person name="Sasamoto S."/>
            <person name="Kimura T."/>
            <person name="Idesawa K."/>
            <person name="Kawashima K."/>
            <person name="Kishida Y."/>
            <person name="Kiyokawa C."/>
            <person name="Kohara M."/>
            <person name="Matsumoto M."/>
            <person name="Matsuno A."/>
            <person name="Muraki A."/>
            <person name="Nakayama S."/>
            <person name="Nakazaki N."/>
            <person name="Shinpo S."/>
            <person name="Takeuchi C."/>
            <person name="Wada T."/>
            <person name="Watanabe A."/>
            <person name="Yamada M."/>
            <person name="Yasuda M."/>
            <person name="Tabata S."/>
        </authorList>
    </citation>
    <scope>NUCLEOTIDE SEQUENCE [LARGE SCALE GENOMIC DNA]</scope>
    <source>
        <strain>cv. Columbia</strain>
    </source>
</reference>
<reference key="2">
    <citation type="journal article" date="2017" name="Plant J.">
        <title>Araport11: a complete reannotation of the Arabidopsis thaliana reference genome.</title>
        <authorList>
            <person name="Cheng C.Y."/>
            <person name="Krishnakumar V."/>
            <person name="Chan A.P."/>
            <person name="Thibaud-Nissen F."/>
            <person name="Schobel S."/>
            <person name="Town C.D."/>
        </authorList>
    </citation>
    <scope>GENOME REANNOTATION</scope>
    <source>
        <strain>cv. Columbia</strain>
    </source>
</reference>
<reference key="3">
    <citation type="submission" date="2005-05" db="EMBL/GenBank/DDBJ databases">
        <authorList>
            <person name="Underwood B.A."/>
            <person name="Xiao Y.-L."/>
            <person name="Moskal W.A. Jr."/>
            <person name="Monaghan E.L."/>
            <person name="Wang W."/>
            <person name="Redman J.C."/>
            <person name="Wu H.C."/>
            <person name="Utterback T."/>
            <person name="Town C.D."/>
        </authorList>
    </citation>
    <scope>NUCLEOTIDE SEQUENCE [LARGE SCALE MRNA]</scope>
    <source>
        <strain>cv. Columbia</strain>
    </source>
</reference>
<feature type="chain" id="PRO_0000283467" description="F-box protein At3g49450">
    <location>
        <begin position="1"/>
        <end position="397"/>
    </location>
</feature>
<feature type="domain" description="F-box" evidence="1">
    <location>
        <begin position="26"/>
        <end position="75"/>
    </location>
</feature>
<sequence length="397" mass="45433">MMKKRKRKVSKENVALTISSSVGEYGENSGTLPTDLMVEILSRVPAKSAARFRCVSNDWNSLLRSPYLTNLFLKRSSARPHLLITFQAEGKWSFFSSPEYLISDQNSNLVVVDNHMDVPKDYSFGVCVPVCGLMCTSNEWVLSRKRDARMMICNPSTGQFKSLPKVRSCRGNVITYIGYNPIEKQYKVLCMTIREKPFKFKAEEHQVLTLGTGKLKWRMLECSVDHYPYYHGSICINGVLFYLAMKSESKEYMTVSFHMKDENFMFIPNQDLLSTLINYKGRLGGIRHKSFGFMDGGDVGFELWILDVVNQEWIRSIHVLPPMWKDVVGETRVYFVGIIGSCEVVFSPFVKSNPFYIFHLDMKSNSITRVEIKGTGPLEGQAVYTFVNHIENVNLIM</sequence>